<proteinExistence type="evidence at protein level"/>
<name>SIR2_CANAL</name>
<comment type="function">
    <text evidence="5 6 10">NAD-dependent deacetylase. Heterochromatin component that silences transcription at silent mating loci, telomeres and the ribosomal DNA, and that also suppresses recombination in the rDNA and extends replicative life span. It acts as a NAD-dependent histone deacetylase, which deacetylates 'Lys-9' and 'Lys-14' of Histone H3 and 'Lys-16' of Histone H4. Functions in the distribution of oxidatively damaged proteins during cell division. Mediates phenotypic switching.</text>
</comment>
<comment type="catalytic activity">
    <reaction evidence="3">
        <text>N(6)-acetyl-L-lysyl-[protein] + NAD(+) + H2O = 2''-O-acetyl-ADP-D-ribose + nicotinamide + L-lysyl-[protein]</text>
        <dbReference type="Rhea" id="RHEA:43636"/>
        <dbReference type="Rhea" id="RHEA-COMP:9752"/>
        <dbReference type="Rhea" id="RHEA-COMP:10731"/>
        <dbReference type="ChEBI" id="CHEBI:15377"/>
        <dbReference type="ChEBI" id="CHEBI:17154"/>
        <dbReference type="ChEBI" id="CHEBI:29969"/>
        <dbReference type="ChEBI" id="CHEBI:57540"/>
        <dbReference type="ChEBI" id="CHEBI:61930"/>
        <dbReference type="ChEBI" id="CHEBI:83767"/>
        <dbReference type="EC" id="2.3.1.286"/>
    </reaction>
</comment>
<comment type="cofactor">
    <cofactor evidence="2">
        <name>Zn(2+)</name>
        <dbReference type="ChEBI" id="CHEBI:29105"/>
    </cofactor>
    <text evidence="2">Binds 1 zinc ion per subunit.</text>
</comment>
<comment type="subunit">
    <text evidence="10">Interacts with HXK1.</text>
</comment>
<comment type="subcellular location">
    <subcellularLocation>
        <location evidence="1 2">Nucleus</location>
    </subcellularLocation>
</comment>
<comment type="induction">
    <text evidence="7 8 9">Expression is up-regulated and increases progressively with hyphal development. Expression is inhibited by 2-dodecanol and decreased by allicin and fluconazole.</text>
</comment>
<comment type="disruption phenotype">
    <text evidence="5 6">Leads to high frequency phenotypic switching, spontaneous hyphal growth, and decreased replicative lifespan. Shows also oxidatively damaged proteins even distribution between mother and daughter cells during division.</text>
</comment>
<comment type="similarity">
    <text evidence="12">Belongs to the sirtuin family. Class I subfamily.</text>
</comment>
<keyword id="KW-0479">Metal-binding</keyword>
<keyword id="KW-0520">NAD</keyword>
<keyword id="KW-0539">Nucleus</keyword>
<keyword id="KW-1185">Reference proteome</keyword>
<keyword id="KW-0678">Repressor</keyword>
<keyword id="KW-0804">Transcription</keyword>
<keyword id="KW-0805">Transcription regulation</keyword>
<keyword id="KW-0808">Transferase</keyword>
<keyword id="KW-0862">Zinc</keyword>
<protein>
    <recommendedName>
        <fullName evidence="12">NAD-dependent histone deacetylase SIR2</fullName>
        <ecNumber evidence="2 3">2.3.1.286</ecNumber>
    </recommendedName>
    <alternativeName>
        <fullName evidence="12">Regulatory protein SIR2</fullName>
    </alternativeName>
    <alternativeName>
        <fullName evidence="12">Silent information regulator 2</fullName>
    </alternativeName>
</protein>
<feature type="chain" id="PRO_0000110275" description="NAD-dependent histone deacetylase SIR2">
    <location>
        <begin position="1"/>
        <end position="519"/>
    </location>
</feature>
<feature type="domain" description="Deacetylase sirtuin-type" evidence="3">
    <location>
        <begin position="221"/>
        <end position="486"/>
    </location>
</feature>
<feature type="region of interest" description="Disordered" evidence="4">
    <location>
        <begin position="154"/>
        <end position="212"/>
    </location>
</feature>
<feature type="compositionally biased region" description="Acidic residues" evidence="4">
    <location>
        <begin position="187"/>
        <end position="208"/>
    </location>
</feature>
<feature type="active site" description="Proton acceptor" evidence="3">
    <location>
        <position position="348"/>
    </location>
</feature>
<feature type="binding site" evidence="1">
    <location>
        <begin position="246"/>
        <end position="265"/>
    </location>
    <ligand>
        <name>NAD(+)</name>
        <dbReference type="ChEBI" id="CHEBI:57540"/>
    </ligand>
</feature>
<feature type="binding site" evidence="1">
    <location>
        <begin position="328"/>
        <end position="331"/>
    </location>
    <ligand>
        <name>NAD(+)</name>
        <dbReference type="ChEBI" id="CHEBI:57540"/>
    </ligand>
</feature>
<feature type="binding site" evidence="3">
    <location>
        <position position="356"/>
    </location>
    <ligand>
        <name>Zn(2+)</name>
        <dbReference type="ChEBI" id="CHEBI:29105"/>
    </ligand>
</feature>
<feature type="binding site" evidence="3">
    <location>
        <position position="359"/>
    </location>
    <ligand>
        <name>Zn(2+)</name>
        <dbReference type="ChEBI" id="CHEBI:29105"/>
    </ligand>
</feature>
<feature type="binding site" evidence="3">
    <location>
        <position position="380"/>
    </location>
    <ligand>
        <name>Zn(2+)</name>
        <dbReference type="ChEBI" id="CHEBI:29105"/>
    </ligand>
</feature>
<feature type="binding site" evidence="3">
    <location>
        <position position="383"/>
    </location>
    <ligand>
        <name>Zn(2+)</name>
        <dbReference type="ChEBI" id="CHEBI:29105"/>
    </ligand>
</feature>
<feature type="binding site" evidence="1">
    <location>
        <begin position="430"/>
        <end position="432"/>
    </location>
    <ligand>
        <name>NAD(+)</name>
        <dbReference type="ChEBI" id="CHEBI:57540"/>
    </ligand>
</feature>
<feature type="binding site" evidence="1">
    <location>
        <begin position="455"/>
        <end position="457"/>
    </location>
    <ligand>
        <name>NAD(+)</name>
        <dbReference type="ChEBI" id="CHEBI:57540"/>
    </ligand>
</feature>
<feature type="binding site" evidence="1">
    <location>
        <position position="472"/>
    </location>
    <ligand>
        <name>NAD(+)</name>
        <dbReference type="ChEBI" id="CHEBI:57540"/>
    </ligand>
</feature>
<feature type="sequence conflict" description="In Ref. 1; AAC09304." evidence="12" ref="1">
    <original>L</original>
    <variation>P</variation>
    <location>
        <position position="96"/>
    </location>
</feature>
<feature type="sequence conflict" description="In Ref. 1; AAC09304." evidence="12" ref="1">
    <original>V</original>
    <variation>A</variation>
    <location>
        <position position="111"/>
    </location>
</feature>
<feature type="sequence conflict" description="In Ref. 1; AAC09304." evidence="12" ref="1">
    <location>
        <begin position="173"/>
        <end position="176"/>
    </location>
</feature>
<feature type="sequence conflict" description="In Ref. 1; AAC09304." evidence="12" ref="1">
    <original>D</original>
    <variation>G</variation>
    <location>
        <position position="190"/>
    </location>
</feature>
<feature type="sequence conflict" description="In Ref. 1; AAC09304." evidence="12" ref="1">
    <original>S</original>
    <variation>P</variation>
    <location>
        <position position="200"/>
    </location>
</feature>
<feature type="sequence conflict" description="In Ref. 1; AAC09304." evidence="12" ref="1">
    <original>PG</original>
    <variation>GR</variation>
    <location>
        <begin position="289"/>
        <end position="290"/>
    </location>
</feature>
<feature type="sequence conflict" description="In Ref. 1; AAC09304." evidence="12" ref="1">
    <original>V</original>
    <variation>A</variation>
    <location>
        <position position="475"/>
    </location>
</feature>
<feature type="sequence conflict" description="In Ref. 1; AAC09304." evidence="12" ref="1">
    <original>F</original>
    <variation>L</variation>
    <location>
        <position position="498"/>
    </location>
</feature>
<feature type="sequence conflict" description="In Ref. 1; AAC09304." evidence="12" ref="1">
    <original>K</original>
    <variation>N</variation>
    <location>
        <position position="512"/>
    </location>
</feature>
<evidence type="ECO:0000250" key="1"/>
<evidence type="ECO:0000250" key="2">
    <source>
        <dbReference type="UniProtKB" id="P06700"/>
    </source>
</evidence>
<evidence type="ECO:0000255" key="3">
    <source>
        <dbReference type="PROSITE-ProRule" id="PRU00236"/>
    </source>
</evidence>
<evidence type="ECO:0000256" key="4">
    <source>
        <dbReference type="SAM" id="MobiDB-lite"/>
    </source>
</evidence>
<evidence type="ECO:0000269" key="5">
    <source>
    </source>
</evidence>
<evidence type="ECO:0000269" key="6">
    <source>
    </source>
</evidence>
<evidence type="ECO:0000269" key="7">
    <source>
    </source>
</evidence>
<evidence type="ECO:0000269" key="8">
    <source>
    </source>
</evidence>
<evidence type="ECO:0000269" key="9">
    <source>
    </source>
</evidence>
<evidence type="ECO:0000269" key="10">
    <source>
    </source>
</evidence>
<evidence type="ECO:0000303" key="11">
    <source>
    </source>
</evidence>
<evidence type="ECO:0000305" key="12"/>
<gene>
    <name evidence="11" type="primary">SIR2</name>
    <name type="synonym">SIR21</name>
    <name type="ordered locus">CAALFM_C201330CA</name>
    <name type="ORF">CaO19.1992</name>
    <name type="ORF">CaO19.9544</name>
</gene>
<accession>O59923</accession>
<accession>A0A1D8PGB6</accession>
<accession>Q5AD75</accession>
<accession>Q5ADK3</accession>
<reference key="1">
    <citation type="journal article" date="1999" name="EMBO J.">
        <title>Phenotypic switching in Candida albicans is controlled by a SIR2 gene.</title>
        <authorList>
            <person name="Perez-Martin J."/>
            <person name="Uria J.A."/>
            <person name="Johnson A.D."/>
        </authorList>
    </citation>
    <scope>NUCLEOTIDE SEQUENCE [GENOMIC DNA]</scope>
    <scope>DISRUPTION PHENOTYPE</scope>
    <scope>FUNCTION</scope>
    <source>
        <strain>SC5314 / ATCC MYA-2876</strain>
    </source>
</reference>
<reference key="2">
    <citation type="journal article" date="2004" name="Proc. Natl. Acad. Sci. U.S.A.">
        <title>The diploid genome sequence of Candida albicans.</title>
        <authorList>
            <person name="Jones T."/>
            <person name="Federspiel N.A."/>
            <person name="Chibana H."/>
            <person name="Dungan J."/>
            <person name="Kalman S."/>
            <person name="Magee B.B."/>
            <person name="Newport G."/>
            <person name="Thorstenson Y.R."/>
            <person name="Agabian N."/>
            <person name="Magee P.T."/>
            <person name="Davis R.W."/>
            <person name="Scherer S."/>
        </authorList>
    </citation>
    <scope>NUCLEOTIDE SEQUENCE [LARGE SCALE GENOMIC DNA]</scope>
    <source>
        <strain>SC5314 / ATCC MYA-2876</strain>
    </source>
</reference>
<reference key="3">
    <citation type="journal article" date="2007" name="Genome Biol.">
        <title>Assembly of the Candida albicans genome into sixteen supercontigs aligned on the eight chromosomes.</title>
        <authorList>
            <person name="van het Hoog M."/>
            <person name="Rast T.J."/>
            <person name="Martchenko M."/>
            <person name="Grindle S."/>
            <person name="Dignard D."/>
            <person name="Hogues H."/>
            <person name="Cuomo C."/>
            <person name="Berriman M."/>
            <person name="Scherer S."/>
            <person name="Magee B.B."/>
            <person name="Whiteway M."/>
            <person name="Chibana H."/>
            <person name="Nantel A."/>
            <person name="Magee P.T."/>
        </authorList>
    </citation>
    <scope>GENOME REANNOTATION</scope>
    <source>
        <strain>SC5314 / ATCC MYA-2876</strain>
    </source>
</reference>
<reference key="4">
    <citation type="journal article" date="2013" name="Genome Biol.">
        <title>Assembly of a phased diploid Candida albicans genome facilitates allele-specific measurements and provides a simple model for repeat and indel structure.</title>
        <authorList>
            <person name="Muzzey D."/>
            <person name="Schwartz K."/>
            <person name="Weissman J.S."/>
            <person name="Sherlock G."/>
        </authorList>
    </citation>
    <scope>NUCLEOTIDE SEQUENCE [LARGE SCALE GENOMIC DNA]</scope>
    <scope>GENOME REANNOTATION</scope>
    <source>
        <strain>SC5314 / ATCC MYA-2876</strain>
    </source>
</reference>
<reference key="5">
    <citation type="journal article" date="2008" name="Aging Cell">
        <title>Candida albicans, a distinctive fungal model for cellular aging study.</title>
        <authorList>
            <person name="Fu X.H."/>
            <person name="Meng F.L."/>
            <person name="Hu Y."/>
            <person name="Zhou J.Q."/>
        </authorList>
    </citation>
    <scope>DISRUPTION PHENOTYPE</scope>
    <scope>FUNCTION</scope>
</reference>
<reference key="6">
    <citation type="journal article" date="2008" name="J. Appl. Microbiol.">
        <title>Inhibition of hyphae formation and SIR2 expression in Candida albicans treated with fresh Allium sativum (garlic) extract.</title>
        <authorList>
            <person name="Low C.F."/>
            <person name="Chong P.P."/>
            <person name="Yong P.V."/>
            <person name="Lim C.S."/>
            <person name="Ahmad Z."/>
            <person name="Othman F."/>
        </authorList>
    </citation>
    <scope>INDUCTION</scope>
</reference>
<reference key="7">
    <citation type="journal article" date="2009" name="J. Basic Microbiol.">
        <title>2-dodecanol (decyl methyl carbinol) inhibits hyphal formation and SIR2 expression in C. albicans.</title>
        <authorList>
            <person name="Lim C.S."/>
            <person name="Wong W.F."/>
            <person name="Rosli R."/>
            <person name="Ng K.P."/>
            <person name="Seow H.F."/>
            <person name="Chong P.P."/>
        </authorList>
    </citation>
    <scope>INDUCTION</scope>
</reference>
<reference key="8">
    <citation type="journal article" date="2011" name="Trop. Biomed.">
        <title>Expression analysis of SIR2 and SAPs1-4 gene expression in Candida albicans treated with allicin compared to fluconazole.</title>
        <authorList>
            <person name="Khodavandi A."/>
            <person name="Alizadeh F."/>
            <person name="Harmal N.S."/>
            <person name="Sidik S.M."/>
            <person name="Othman F."/>
            <person name="Sekawi Z."/>
            <person name="Chong P.P."/>
        </authorList>
    </citation>
    <scope>INDUCTION</scope>
</reference>
<reference key="9">
    <citation type="journal article" date="2013" name="PLoS ONE">
        <title>N-acetylglucosamine kinase, HXK1 is involved in morphogenetic transition and metabolic gene expression in Candida albicans.</title>
        <authorList>
            <person name="Rao K.H."/>
            <person name="Ghosh S."/>
            <person name="Natarajan K."/>
            <person name="Datta A."/>
        </authorList>
    </citation>
    <scope>INTERACTION WITH HXK1</scope>
    <scope>FUNCTION</scope>
</reference>
<organism>
    <name type="scientific">Candida albicans (strain SC5314 / ATCC MYA-2876)</name>
    <name type="common">Yeast</name>
    <dbReference type="NCBI Taxonomy" id="237561"/>
    <lineage>
        <taxon>Eukaryota</taxon>
        <taxon>Fungi</taxon>
        <taxon>Dikarya</taxon>
        <taxon>Ascomycota</taxon>
        <taxon>Saccharomycotina</taxon>
        <taxon>Pichiomycetes</taxon>
        <taxon>Debaryomycetaceae</taxon>
        <taxon>Candida/Lodderomyces clade</taxon>
        <taxon>Candida</taxon>
    </lineage>
</organism>
<sequence>MTTFWSQTINRQNGGVATATATATATAATTTPTAGGTGAGTTTSTKGMITPTPFNIDINNDLNDFDGKFIETFKPDLELQKKYRSFIQREGALSFLRTEITQSMSKRDICVLILNLGYPKKAVEDYPILTLKELAYILLKLMLTDSAQLEPKVEIDENDNKNDGTNNSDIDSDIDSNSDMDSQSESGELDDAMDVDDSLSENEDEYDQDMSTTTLKRTINMTPFKYKLPDLISDLSRAKKIMVVTGAGISTSLGIPDFRSFKGLYNQLSKLNLSDPQKVFDLQTFMREPGLFYTIAHLVLPPDGKFSLLHAFLKLLQDKHKLLRNYTQNIDNLEQRAGLKSEKLVQCHGSFAKAKCVSCQGIFAGEKIYNHIRRKQVPRCAICWKNTKQAPIHFGAIKPTITFFGEDLPERFHTLMDKDLQQIDLFLVIGTSLKVEPVASIIERVPYKVPKILINKDPIPNRGFNLQLLGLCDDVVSYLCKCLKWDIPHADFNNNDEFKLSKLKNGDWEIVKKSTSTKK</sequence>
<dbReference type="EC" id="2.3.1.286" evidence="2 3"/>
<dbReference type="EMBL" id="AF045774">
    <property type="protein sequence ID" value="AAC09304.1"/>
    <property type="molecule type" value="Genomic_DNA"/>
</dbReference>
<dbReference type="EMBL" id="CP017624">
    <property type="protein sequence ID" value="AOW27179.1"/>
    <property type="molecule type" value="Genomic_DNA"/>
</dbReference>
<dbReference type="RefSeq" id="XP_719442.1">
    <property type="nucleotide sequence ID" value="XM_714349.1"/>
</dbReference>
<dbReference type="SMR" id="O59923"/>
<dbReference type="STRING" id="237561.O59923"/>
<dbReference type="EnsemblFungi" id="C2_01330C_A-T">
    <property type="protein sequence ID" value="C2_01330C_A-T-p1"/>
    <property type="gene ID" value="C2_01330C_A"/>
</dbReference>
<dbReference type="GeneID" id="3638845"/>
<dbReference type="KEGG" id="cal:CAALFM_C201330CA"/>
<dbReference type="CGD" id="CAL0000181323">
    <property type="gene designation" value="SIR2"/>
</dbReference>
<dbReference type="VEuPathDB" id="FungiDB:C2_01330C_A"/>
<dbReference type="eggNOG" id="KOG2684">
    <property type="taxonomic scope" value="Eukaryota"/>
</dbReference>
<dbReference type="HOGENOM" id="CLU_023643_5_0_1"/>
<dbReference type="InParanoid" id="O59923"/>
<dbReference type="OMA" id="PDFRSFK"/>
<dbReference type="OrthoDB" id="420264at2759"/>
<dbReference type="PRO" id="PR:O59923"/>
<dbReference type="Proteomes" id="UP000000559">
    <property type="component" value="Chromosome 2"/>
</dbReference>
<dbReference type="GO" id="GO:0005634">
    <property type="term" value="C:nucleus"/>
    <property type="evidence" value="ECO:0000314"/>
    <property type="project" value="CGD"/>
</dbReference>
<dbReference type="GO" id="GO:0046970">
    <property type="term" value="F:histone H4K16 deacetylase activity, NAD-dependent"/>
    <property type="evidence" value="ECO:0000318"/>
    <property type="project" value="GO_Central"/>
</dbReference>
<dbReference type="GO" id="GO:0046872">
    <property type="term" value="F:metal ion binding"/>
    <property type="evidence" value="ECO:0007669"/>
    <property type="project" value="UniProtKB-KW"/>
</dbReference>
<dbReference type="GO" id="GO:0070403">
    <property type="term" value="F:NAD+ binding"/>
    <property type="evidence" value="ECO:0000318"/>
    <property type="project" value="GO_Central"/>
</dbReference>
<dbReference type="GO" id="GO:0044406">
    <property type="term" value="P:adhesion of symbiont to host"/>
    <property type="evidence" value="ECO:0000315"/>
    <property type="project" value="CGD"/>
</dbReference>
<dbReference type="GO" id="GO:0071453">
    <property type="term" value="P:cellular response to oxygen levels"/>
    <property type="evidence" value="ECO:0000315"/>
    <property type="project" value="CGD"/>
</dbReference>
<dbReference type="GO" id="GO:0031507">
    <property type="term" value="P:heterochromatin formation"/>
    <property type="evidence" value="ECO:0000318"/>
    <property type="project" value="GO_Central"/>
</dbReference>
<dbReference type="GO" id="GO:0048239">
    <property type="term" value="P:negative regulation of DNA recombination at telomere"/>
    <property type="evidence" value="ECO:0000315"/>
    <property type="project" value="CGD"/>
</dbReference>
<dbReference type="GO" id="GO:0036166">
    <property type="term" value="P:phenotypic switching"/>
    <property type="evidence" value="ECO:0000315"/>
    <property type="project" value="CGD"/>
</dbReference>
<dbReference type="GO" id="GO:0000183">
    <property type="term" value="P:rDNA heterochromatin formation"/>
    <property type="evidence" value="ECO:0000315"/>
    <property type="project" value="CGD"/>
</dbReference>
<dbReference type="GO" id="GO:0045595">
    <property type="term" value="P:regulation of cell differentiation"/>
    <property type="evidence" value="ECO:0000315"/>
    <property type="project" value="CGD"/>
</dbReference>
<dbReference type="GO" id="GO:0032995">
    <property type="term" value="P:regulation of fungal-type cell wall biogenesis"/>
    <property type="evidence" value="ECO:0000315"/>
    <property type="project" value="CGD"/>
</dbReference>
<dbReference type="GO" id="GO:0052562">
    <property type="term" value="P:symbiont-mediated suppression of host immune response"/>
    <property type="evidence" value="ECO:0000315"/>
    <property type="project" value="CGD"/>
</dbReference>
<dbReference type="Gene3D" id="3.30.1600.10">
    <property type="entry name" value="SIR2/SIRT2 'Small Domain"/>
    <property type="match status" value="1"/>
</dbReference>
<dbReference type="Gene3D" id="3.40.50.1220">
    <property type="entry name" value="TPP-binding domain"/>
    <property type="match status" value="1"/>
</dbReference>
<dbReference type="InterPro" id="IPR029035">
    <property type="entry name" value="DHS-like_NAD/FAD-binding_dom"/>
</dbReference>
<dbReference type="InterPro" id="IPR050134">
    <property type="entry name" value="NAD-dep_sirtuin_deacylases"/>
</dbReference>
<dbReference type="InterPro" id="IPR003000">
    <property type="entry name" value="Sirtuin"/>
</dbReference>
<dbReference type="InterPro" id="IPR026591">
    <property type="entry name" value="Sirtuin_cat_small_dom_sf"/>
</dbReference>
<dbReference type="InterPro" id="IPR026590">
    <property type="entry name" value="Ssirtuin_cat_dom"/>
</dbReference>
<dbReference type="PANTHER" id="PTHR11085:SF9">
    <property type="entry name" value="NAD-DEPENDENT PROTEIN DEACETYLASE SIRTUIN-1"/>
    <property type="match status" value="1"/>
</dbReference>
<dbReference type="PANTHER" id="PTHR11085">
    <property type="entry name" value="NAD-DEPENDENT PROTEIN DEACYLASE SIRTUIN-5, MITOCHONDRIAL-RELATED"/>
    <property type="match status" value="1"/>
</dbReference>
<dbReference type="Pfam" id="PF02146">
    <property type="entry name" value="SIR2"/>
    <property type="match status" value="1"/>
</dbReference>
<dbReference type="SUPFAM" id="SSF52467">
    <property type="entry name" value="DHS-like NAD/FAD-binding domain"/>
    <property type="match status" value="1"/>
</dbReference>
<dbReference type="PROSITE" id="PS50305">
    <property type="entry name" value="SIRTUIN"/>
    <property type="match status" value="1"/>
</dbReference>